<keyword id="KW-0687">Ribonucleoprotein</keyword>
<keyword id="KW-0690">Ribosome biogenesis</keyword>
<keyword id="KW-0698">rRNA processing</keyword>
<organism>
    <name type="scientific">Methanococcus maripaludis (strain C6 / ATCC BAA-1332)</name>
    <dbReference type="NCBI Taxonomy" id="444158"/>
    <lineage>
        <taxon>Archaea</taxon>
        <taxon>Methanobacteriati</taxon>
        <taxon>Methanobacteriota</taxon>
        <taxon>Methanomada group</taxon>
        <taxon>Methanococci</taxon>
        <taxon>Methanococcales</taxon>
        <taxon>Methanococcaceae</taxon>
        <taxon>Methanococcus</taxon>
    </lineage>
</organism>
<feature type="chain" id="PRO_1000133931" description="Ribosome biogenesis protein Nop10">
    <location>
        <begin position="1"/>
        <end position="51"/>
    </location>
</feature>
<comment type="function">
    <text evidence="1">Involved in ribosome biogenesis; more specifically in 18S rRNA pseudouridylation and in cleavage of pre-rRNA.</text>
</comment>
<comment type="similarity">
    <text evidence="1">Belongs to the NOP10 family.</text>
</comment>
<proteinExistence type="inferred from homology"/>
<dbReference type="EMBL" id="CP000867">
    <property type="protein sequence ID" value="ABX01780.1"/>
    <property type="molecule type" value="Genomic_DNA"/>
</dbReference>
<dbReference type="SMR" id="A9A8V7"/>
<dbReference type="STRING" id="444158.MmarC6_0965"/>
<dbReference type="KEGG" id="mmx:MmarC6_0965"/>
<dbReference type="eggNOG" id="arCOG00906">
    <property type="taxonomic scope" value="Archaea"/>
</dbReference>
<dbReference type="HOGENOM" id="CLU_196480_1_0_2"/>
<dbReference type="OrthoDB" id="7259at2157"/>
<dbReference type="PhylomeDB" id="A9A8V7"/>
<dbReference type="GO" id="GO:1990904">
    <property type="term" value="C:ribonucleoprotein complex"/>
    <property type="evidence" value="ECO:0007669"/>
    <property type="project" value="UniProtKB-KW"/>
</dbReference>
<dbReference type="GO" id="GO:0030515">
    <property type="term" value="F:snoRNA binding"/>
    <property type="evidence" value="ECO:0007669"/>
    <property type="project" value="InterPro"/>
</dbReference>
<dbReference type="GO" id="GO:0001522">
    <property type="term" value="P:pseudouridine synthesis"/>
    <property type="evidence" value="ECO:0007669"/>
    <property type="project" value="InterPro"/>
</dbReference>
<dbReference type="GO" id="GO:0006364">
    <property type="term" value="P:rRNA processing"/>
    <property type="evidence" value="ECO:0007669"/>
    <property type="project" value="UniProtKB-UniRule"/>
</dbReference>
<dbReference type="Gene3D" id="2.20.28.40">
    <property type="entry name" value="H/ACA ribonucleoprotein complex, subunit Nop10"/>
    <property type="match status" value="1"/>
</dbReference>
<dbReference type="HAMAP" id="MF_00803">
    <property type="entry name" value="Nop10"/>
    <property type="match status" value="1"/>
</dbReference>
<dbReference type="InterPro" id="IPR007264">
    <property type="entry name" value="H/ACA_rnp_Nop10"/>
</dbReference>
<dbReference type="InterPro" id="IPR036756">
    <property type="entry name" value="H/ACA_rnp_Nop10_sf"/>
</dbReference>
<dbReference type="InterPro" id="IPR023532">
    <property type="entry name" value="Nop10_arc-typ"/>
</dbReference>
<dbReference type="NCBIfam" id="NF009623">
    <property type="entry name" value="PRK13130.1"/>
    <property type="match status" value="1"/>
</dbReference>
<dbReference type="Pfam" id="PF04135">
    <property type="entry name" value="Nop10p"/>
    <property type="match status" value="1"/>
</dbReference>
<dbReference type="SUPFAM" id="SSF144210">
    <property type="entry name" value="Nop10-like SnoRNP"/>
    <property type="match status" value="1"/>
</dbReference>
<reference key="1">
    <citation type="submission" date="2007-10" db="EMBL/GenBank/DDBJ databases">
        <title>Complete sequence of Methanococcus maripaludis C6.</title>
        <authorList>
            <consortium name="US DOE Joint Genome Institute"/>
            <person name="Copeland A."/>
            <person name="Lucas S."/>
            <person name="Lapidus A."/>
            <person name="Barry K."/>
            <person name="Glavina del Rio T."/>
            <person name="Dalin E."/>
            <person name="Tice H."/>
            <person name="Pitluck S."/>
            <person name="Clum A."/>
            <person name="Schmutz J."/>
            <person name="Larimer F."/>
            <person name="Land M."/>
            <person name="Hauser L."/>
            <person name="Kyrpides N."/>
            <person name="Mikhailova N."/>
            <person name="Sieprawska-Lupa M."/>
            <person name="Whitman W.B."/>
            <person name="Richardson P."/>
        </authorList>
    </citation>
    <scope>NUCLEOTIDE SEQUENCE [LARGE SCALE GENOMIC DNA]</scope>
    <source>
        <strain>C6 / ATCC BAA-1332</strain>
    </source>
</reference>
<sequence length="51" mass="5949">MKMKKCPKCGKYTLKDFCSECNEKSVTVKPPKFSPVDKYGKYRRALKKAKM</sequence>
<name>NOP10_METM6</name>
<protein>
    <recommendedName>
        <fullName evidence="1">Ribosome biogenesis protein Nop10</fullName>
    </recommendedName>
</protein>
<gene>
    <name evidence="1" type="primary">nop10</name>
    <name type="ordered locus">MmarC6_0965</name>
</gene>
<accession>A9A8V7</accession>
<evidence type="ECO:0000255" key="1">
    <source>
        <dbReference type="HAMAP-Rule" id="MF_00803"/>
    </source>
</evidence>